<accession>Q87KM9</accession>
<keyword id="KW-0997">Cell inner membrane</keyword>
<keyword id="KW-1003">Cell membrane</keyword>
<keyword id="KW-0460">Magnesium</keyword>
<keyword id="KW-0472">Membrane</keyword>
<keyword id="KW-0808">Transferase</keyword>
<keyword id="KW-0812">Transmembrane</keyword>
<keyword id="KW-1133">Transmembrane helix</keyword>
<keyword id="KW-0831">Ubiquinone biosynthesis</keyword>
<proteinExistence type="inferred from homology"/>
<feature type="chain" id="PRO_0000262851" description="4-hydroxybenzoate octaprenyltransferase">
    <location>
        <begin position="1"/>
        <end position="284"/>
    </location>
</feature>
<feature type="transmembrane region" description="Helical" evidence="1">
    <location>
        <begin position="33"/>
        <end position="53"/>
    </location>
</feature>
<feature type="transmembrane region" description="Helical" evidence="1">
    <location>
        <begin position="93"/>
        <end position="113"/>
    </location>
</feature>
<feature type="transmembrane region" description="Helical" evidence="1">
    <location>
        <begin position="136"/>
        <end position="156"/>
    </location>
</feature>
<feature type="transmembrane region" description="Helical" evidence="1">
    <location>
        <begin position="159"/>
        <end position="179"/>
    </location>
</feature>
<feature type="transmembrane region" description="Helical" evidence="1">
    <location>
        <begin position="209"/>
        <end position="229"/>
    </location>
</feature>
<feature type="transmembrane region" description="Helical" evidence="1">
    <location>
        <begin position="235"/>
        <end position="252"/>
    </location>
</feature>
<feature type="transmembrane region" description="Helical" evidence="1">
    <location>
        <begin position="264"/>
        <end position="284"/>
    </location>
</feature>
<sequence length="284" mass="32123">MSAEKAKAYWQLMRMDRPIGSLLLLWPTVWALVIAAQGIPSWDVLIVFVLGVFLMRSAGCVINDFADRKVDGHVKRTKQRPLPSGKVTAKEAIGLFLVLAVSSFLLVLTMNPLTIQLSFAGLVLAFIYPFMKRYTHIPQLFLGLAFSWAIPMAWAAQTGELPVMVWFVFVINALWTIAYDTQYAMVDRDDDLKIGIKSTAILFGRHDKLIIGVLQLVTLAMLVGLGQFYQLGQSYYWTVLIAASLFVYQQHLIRHRERDLCFRAFLNNNYVGMVIAIGLLVAFW</sequence>
<gene>
    <name evidence="1" type="primary">ubiA</name>
    <name type="ordered locus">VP2948</name>
</gene>
<dbReference type="EC" id="2.5.1.39" evidence="1"/>
<dbReference type="EMBL" id="BA000031">
    <property type="protein sequence ID" value="BAC61211.1"/>
    <property type="molecule type" value="Genomic_DNA"/>
</dbReference>
<dbReference type="RefSeq" id="NP_799327.1">
    <property type="nucleotide sequence ID" value="NC_004603.1"/>
</dbReference>
<dbReference type="RefSeq" id="WP_005460372.1">
    <property type="nucleotide sequence ID" value="NC_004603.1"/>
</dbReference>
<dbReference type="SMR" id="Q87KM9"/>
<dbReference type="GeneID" id="1190534"/>
<dbReference type="KEGG" id="vpa:VP2948"/>
<dbReference type="PATRIC" id="fig|223926.6.peg.2837"/>
<dbReference type="eggNOG" id="COG0382">
    <property type="taxonomic scope" value="Bacteria"/>
</dbReference>
<dbReference type="HOGENOM" id="CLU_034879_1_0_6"/>
<dbReference type="UniPathway" id="UPA00232"/>
<dbReference type="Proteomes" id="UP000002493">
    <property type="component" value="Chromosome 1"/>
</dbReference>
<dbReference type="GO" id="GO:0005886">
    <property type="term" value="C:plasma membrane"/>
    <property type="evidence" value="ECO:0007669"/>
    <property type="project" value="UniProtKB-SubCell"/>
</dbReference>
<dbReference type="GO" id="GO:0008412">
    <property type="term" value="F:4-hydroxybenzoate polyprenyltransferase activity"/>
    <property type="evidence" value="ECO:0007669"/>
    <property type="project" value="UniProtKB-UniRule"/>
</dbReference>
<dbReference type="GO" id="GO:0006744">
    <property type="term" value="P:ubiquinone biosynthetic process"/>
    <property type="evidence" value="ECO:0007669"/>
    <property type="project" value="UniProtKB-UniRule"/>
</dbReference>
<dbReference type="CDD" id="cd13959">
    <property type="entry name" value="PT_UbiA_COQ2"/>
    <property type="match status" value="1"/>
</dbReference>
<dbReference type="FunFam" id="1.10.357.140:FF:000002">
    <property type="entry name" value="4-hydroxybenzoate octaprenyltransferase"/>
    <property type="match status" value="1"/>
</dbReference>
<dbReference type="FunFam" id="1.20.120.1780:FF:000001">
    <property type="entry name" value="4-hydroxybenzoate octaprenyltransferase"/>
    <property type="match status" value="1"/>
</dbReference>
<dbReference type="Gene3D" id="1.10.357.140">
    <property type="entry name" value="UbiA prenyltransferase"/>
    <property type="match status" value="1"/>
</dbReference>
<dbReference type="Gene3D" id="1.20.120.1780">
    <property type="entry name" value="UbiA prenyltransferase"/>
    <property type="match status" value="1"/>
</dbReference>
<dbReference type="HAMAP" id="MF_01635">
    <property type="entry name" value="UbiA"/>
    <property type="match status" value="1"/>
</dbReference>
<dbReference type="InterPro" id="IPR006370">
    <property type="entry name" value="HB_polyprenyltransferase-like"/>
</dbReference>
<dbReference type="InterPro" id="IPR039653">
    <property type="entry name" value="Prenyltransferase"/>
</dbReference>
<dbReference type="InterPro" id="IPR000537">
    <property type="entry name" value="UbiA_prenyltransferase"/>
</dbReference>
<dbReference type="InterPro" id="IPR044878">
    <property type="entry name" value="UbiA_sf"/>
</dbReference>
<dbReference type="NCBIfam" id="TIGR01474">
    <property type="entry name" value="ubiA_proteo"/>
    <property type="match status" value="1"/>
</dbReference>
<dbReference type="PANTHER" id="PTHR11048:SF28">
    <property type="entry name" value="4-HYDROXYBENZOATE POLYPRENYLTRANSFERASE, MITOCHONDRIAL"/>
    <property type="match status" value="1"/>
</dbReference>
<dbReference type="PANTHER" id="PTHR11048">
    <property type="entry name" value="PRENYLTRANSFERASES"/>
    <property type="match status" value="1"/>
</dbReference>
<dbReference type="Pfam" id="PF01040">
    <property type="entry name" value="UbiA"/>
    <property type="match status" value="1"/>
</dbReference>
<comment type="function">
    <text evidence="1">Catalyzes the prenylation of para-hydroxybenzoate (PHB) with an all-trans polyprenyl group. Mediates the second step in the final reaction sequence of ubiquinone-8 (UQ-8) biosynthesis, which is the condensation of the polyisoprenoid side chain with PHB, generating the first membrane-bound Q intermediate 3-octaprenyl-4-hydroxybenzoate.</text>
</comment>
<comment type="catalytic activity">
    <reaction evidence="1">
        <text>all-trans-octaprenyl diphosphate + 4-hydroxybenzoate = 4-hydroxy-3-(all-trans-octaprenyl)benzoate + diphosphate</text>
        <dbReference type="Rhea" id="RHEA:27782"/>
        <dbReference type="ChEBI" id="CHEBI:1617"/>
        <dbReference type="ChEBI" id="CHEBI:17879"/>
        <dbReference type="ChEBI" id="CHEBI:33019"/>
        <dbReference type="ChEBI" id="CHEBI:57711"/>
        <dbReference type="EC" id="2.5.1.39"/>
    </reaction>
</comment>
<comment type="cofactor">
    <cofactor evidence="1">
        <name>Mg(2+)</name>
        <dbReference type="ChEBI" id="CHEBI:18420"/>
    </cofactor>
</comment>
<comment type="pathway">
    <text evidence="1">Cofactor biosynthesis; ubiquinone biosynthesis.</text>
</comment>
<comment type="subcellular location">
    <subcellularLocation>
        <location evidence="1">Cell inner membrane</location>
        <topology evidence="1">Multi-pass membrane protein</topology>
    </subcellularLocation>
</comment>
<comment type="similarity">
    <text evidence="1">Belongs to the UbiA prenyltransferase family.</text>
</comment>
<protein>
    <recommendedName>
        <fullName evidence="1">4-hydroxybenzoate octaprenyltransferase</fullName>
        <ecNumber evidence="1">2.5.1.39</ecNumber>
    </recommendedName>
    <alternativeName>
        <fullName evidence="1">4-HB polyprenyltransferase</fullName>
    </alternativeName>
</protein>
<evidence type="ECO:0000255" key="1">
    <source>
        <dbReference type="HAMAP-Rule" id="MF_01635"/>
    </source>
</evidence>
<reference key="1">
    <citation type="journal article" date="2003" name="Lancet">
        <title>Genome sequence of Vibrio parahaemolyticus: a pathogenic mechanism distinct from that of V. cholerae.</title>
        <authorList>
            <person name="Makino K."/>
            <person name="Oshima K."/>
            <person name="Kurokawa K."/>
            <person name="Yokoyama K."/>
            <person name="Uda T."/>
            <person name="Tagomori K."/>
            <person name="Iijima Y."/>
            <person name="Najima M."/>
            <person name="Nakano M."/>
            <person name="Yamashita A."/>
            <person name="Kubota Y."/>
            <person name="Kimura S."/>
            <person name="Yasunaga T."/>
            <person name="Honda T."/>
            <person name="Shinagawa H."/>
            <person name="Hattori M."/>
            <person name="Iida T."/>
        </authorList>
    </citation>
    <scope>NUCLEOTIDE SEQUENCE [LARGE SCALE GENOMIC DNA]</scope>
    <source>
        <strain>RIMD 2210633</strain>
    </source>
</reference>
<name>UBIA_VIBPA</name>
<organism>
    <name type="scientific">Vibrio parahaemolyticus serotype O3:K6 (strain RIMD 2210633)</name>
    <dbReference type="NCBI Taxonomy" id="223926"/>
    <lineage>
        <taxon>Bacteria</taxon>
        <taxon>Pseudomonadati</taxon>
        <taxon>Pseudomonadota</taxon>
        <taxon>Gammaproteobacteria</taxon>
        <taxon>Vibrionales</taxon>
        <taxon>Vibrionaceae</taxon>
        <taxon>Vibrio</taxon>
    </lineage>
</organism>